<proteinExistence type="inferred from homology"/>
<keyword id="KW-0687">Ribonucleoprotein</keyword>
<keyword id="KW-0689">Ribosomal protein</keyword>
<keyword id="KW-0694">RNA-binding</keyword>
<keyword id="KW-0699">rRNA-binding</keyword>
<gene>
    <name evidence="1" type="primary">rpsK</name>
    <name type="ordered locus">SPC_3486</name>
</gene>
<evidence type="ECO:0000255" key="1">
    <source>
        <dbReference type="HAMAP-Rule" id="MF_01310"/>
    </source>
</evidence>
<evidence type="ECO:0000305" key="2"/>
<name>RS11_SALPC</name>
<protein>
    <recommendedName>
        <fullName evidence="1">Small ribosomal subunit protein uS11</fullName>
    </recommendedName>
    <alternativeName>
        <fullName evidence="2">30S ribosomal protein S11</fullName>
    </alternativeName>
</protein>
<comment type="function">
    <text evidence="1">Located on the platform of the 30S subunit, it bridges several disparate RNA helices of the 16S rRNA. Forms part of the Shine-Dalgarno cleft in the 70S ribosome.</text>
</comment>
<comment type="subunit">
    <text evidence="1">Part of the 30S ribosomal subunit. Interacts with proteins S7 and S18. Binds to IF-3.</text>
</comment>
<comment type="similarity">
    <text evidence="1">Belongs to the universal ribosomal protein uS11 family.</text>
</comment>
<accession>C0PZW0</accession>
<organism>
    <name type="scientific">Salmonella paratyphi C (strain RKS4594)</name>
    <dbReference type="NCBI Taxonomy" id="476213"/>
    <lineage>
        <taxon>Bacteria</taxon>
        <taxon>Pseudomonadati</taxon>
        <taxon>Pseudomonadota</taxon>
        <taxon>Gammaproteobacteria</taxon>
        <taxon>Enterobacterales</taxon>
        <taxon>Enterobacteriaceae</taxon>
        <taxon>Salmonella</taxon>
    </lineage>
</organism>
<reference key="1">
    <citation type="journal article" date="2009" name="PLoS ONE">
        <title>Salmonella paratyphi C: genetic divergence from Salmonella choleraesuis and pathogenic convergence with Salmonella typhi.</title>
        <authorList>
            <person name="Liu W.-Q."/>
            <person name="Feng Y."/>
            <person name="Wang Y."/>
            <person name="Zou Q.-H."/>
            <person name="Chen F."/>
            <person name="Guo J.-T."/>
            <person name="Peng Y.-H."/>
            <person name="Jin Y."/>
            <person name="Li Y.-G."/>
            <person name="Hu S.-N."/>
            <person name="Johnston R.N."/>
            <person name="Liu G.-R."/>
            <person name="Liu S.-L."/>
        </authorList>
    </citation>
    <scope>NUCLEOTIDE SEQUENCE [LARGE SCALE GENOMIC DNA]</scope>
    <source>
        <strain>RKS4594</strain>
    </source>
</reference>
<feature type="chain" id="PRO_1000165565" description="Small ribosomal subunit protein uS11">
    <location>
        <begin position="1"/>
        <end position="129"/>
    </location>
</feature>
<sequence>MAKAPVRARKRVRKQVSDGVAHIHASFNNTIVTITDRQGNALGWATAGGSGFRGSRKSTPFAAQVAAERCADAVKEYGIKNLEVMVKGPGPGRESTIRALNAAGFRITNITDVTPIPHNGCRPPKKRRV</sequence>
<dbReference type="EMBL" id="CP000857">
    <property type="protein sequence ID" value="ACN47570.1"/>
    <property type="molecule type" value="Genomic_DNA"/>
</dbReference>
<dbReference type="RefSeq" id="WP_001029758.1">
    <property type="nucleotide sequence ID" value="NC_012125.1"/>
</dbReference>
<dbReference type="SMR" id="C0PZW0"/>
<dbReference type="GeneID" id="98390419"/>
<dbReference type="KEGG" id="sei:SPC_3486"/>
<dbReference type="HOGENOM" id="CLU_072439_5_0_6"/>
<dbReference type="Proteomes" id="UP000001599">
    <property type="component" value="Chromosome"/>
</dbReference>
<dbReference type="GO" id="GO:1990904">
    <property type="term" value="C:ribonucleoprotein complex"/>
    <property type="evidence" value="ECO:0007669"/>
    <property type="project" value="UniProtKB-KW"/>
</dbReference>
<dbReference type="GO" id="GO:0005840">
    <property type="term" value="C:ribosome"/>
    <property type="evidence" value="ECO:0007669"/>
    <property type="project" value="UniProtKB-KW"/>
</dbReference>
<dbReference type="GO" id="GO:0019843">
    <property type="term" value="F:rRNA binding"/>
    <property type="evidence" value="ECO:0007669"/>
    <property type="project" value="UniProtKB-UniRule"/>
</dbReference>
<dbReference type="GO" id="GO:0003735">
    <property type="term" value="F:structural constituent of ribosome"/>
    <property type="evidence" value="ECO:0007669"/>
    <property type="project" value="InterPro"/>
</dbReference>
<dbReference type="GO" id="GO:0006412">
    <property type="term" value="P:translation"/>
    <property type="evidence" value="ECO:0007669"/>
    <property type="project" value="UniProtKB-UniRule"/>
</dbReference>
<dbReference type="FunFam" id="3.30.420.80:FF:000001">
    <property type="entry name" value="30S ribosomal protein S11"/>
    <property type="match status" value="1"/>
</dbReference>
<dbReference type="Gene3D" id="3.30.420.80">
    <property type="entry name" value="Ribosomal protein S11"/>
    <property type="match status" value="1"/>
</dbReference>
<dbReference type="HAMAP" id="MF_01310">
    <property type="entry name" value="Ribosomal_uS11"/>
    <property type="match status" value="1"/>
</dbReference>
<dbReference type="InterPro" id="IPR001971">
    <property type="entry name" value="Ribosomal_uS11"/>
</dbReference>
<dbReference type="InterPro" id="IPR019981">
    <property type="entry name" value="Ribosomal_uS11_bac-type"/>
</dbReference>
<dbReference type="InterPro" id="IPR018102">
    <property type="entry name" value="Ribosomal_uS11_CS"/>
</dbReference>
<dbReference type="InterPro" id="IPR036967">
    <property type="entry name" value="Ribosomal_uS11_sf"/>
</dbReference>
<dbReference type="NCBIfam" id="NF003698">
    <property type="entry name" value="PRK05309.1"/>
    <property type="match status" value="1"/>
</dbReference>
<dbReference type="NCBIfam" id="TIGR03632">
    <property type="entry name" value="uS11_bact"/>
    <property type="match status" value="1"/>
</dbReference>
<dbReference type="PANTHER" id="PTHR11759">
    <property type="entry name" value="40S RIBOSOMAL PROTEIN S14/30S RIBOSOMAL PROTEIN S11"/>
    <property type="match status" value="1"/>
</dbReference>
<dbReference type="Pfam" id="PF00411">
    <property type="entry name" value="Ribosomal_S11"/>
    <property type="match status" value="1"/>
</dbReference>
<dbReference type="PIRSF" id="PIRSF002131">
    <property type="entry name" value="Ribosomal_S11"/>
    <property type="match status" value="1"/>
</dbReference>
<dbReference type="SUPFAM" id="SSF53137">
    <property type="entry name" value="Translational machinery components"/>
    <property type="match status" value="1"/>
</dbReference>
<dbReference type="PROSITE" id="PS00054">
    <property type="entry name" value="RIBOSOMAL_S11"/>
    <property type="match status" value="1"/>
</dbReference>